<organism>
    <name type="scientific">Mus musculus</name>
    <name type="common">Mouse</name>
    <dbReference type="NCBI Taxonomy" id="10090"/>
    <lineage>
        <taxon>Eukaryota</taxon>
        <taxon>Metazoa</taxon>
        <taxon>Chordata</taxon>
        <taxon>Craniata</taxon>
        <taxon>Vertebrata</taxon>
        <taxon>Euteleostomi</taxon>
        <taxon>Mammalia</taxon>
        <taxon>Eutheria</taxon>
        <taxon>Euarchontoglires</taxon>
        <taxon>Glires</taxon>
        <taxon>Rodentia</taxon>
        <taxon>Myomorpha</taxon>
        <taxon>Muroidea</taxon>
        <taxon>Muridae</taxon>
        <taxon>Murinae</taxon>
        <taxon>Mus</taxon>
        <taxon>Mus</taxon>
    </lineage>
</organism>
<comment type="function">
    <text evidence="1">ATPase that regulates mitochondrial ABC transporters ABCB7, ABCB8/MITOSUR and ABCB10. Regulates mitochondrial ferric concentration and heme biosynthesis and plays a role in the maintenance of mitochondrial homeostasis and cell survival.</text>
</comment>
<comment type="catalytic activity">
    <reaction evidence="1">
        <text>ATP + H2O = ADP + phosphate + H(+)</text>
        <dbReference type="Rhea" id="RHEA:13065"/>
        <dbReference type="ChEBI" id="CHEBI:15377"/>
        <dbReference type="ChEBI" id="CHEBI:15378"/>
        <dbReference type="ChEBI" id="CHEBI:30616"/>
        <dbReference type="ChEBI" id="CHEBI:43474"/>
        <dbReference type="ChEBI" id="CHEBI:456216"/>
    </reaction>
    <physiologicalReaction direction="left-to-right" evidence="1">
        <dbReference type="Rhea" id="RHEA:13066"/>
    </physiologicalReaction>
</comment>
<comment type="subunit">
    <text evidence="1">Homodimer. Interacts with ABCB7, ABCB8/MITOSUR and ABCB10.</text>
</comment>
<comment type="subcellular location">
    <subcellularLocation>
        <location evidence="1">Cytoplasm</location>
    </subcellularLocation>
    <subcellularLocation>
        <location evidence="1">Mitochondrion</location>
    </subcellularLocation>
</comment>
<keyword id="KW-0963">Cytoplasm</keyword>
<keyword id="KW-0378">Hydrolase</keyword>
<keyword id="KW-0496">Mitochondrion</keyword>
<keyword id="KW-0597">Phosphoprotein</keyword>
<keyword id="KW-1185">Reference proteome</keyword>
<feature type="chain" id="PRO_0000260086" description="ATPase PAAT">
    <location>
        <begin position="1"/>
        <end position="444"/>
    </location>
</feature>
<feature type="region of interest" description="Disordered" evidence="2">
    <location>
        <begin position="279"/>
        <end position="300"/>
    </location>
</feature>
<feature type="region of interest" description="Disordered" evidence="2">
    <location>
        <begin position="424"/>
        <end position="444"/>
    </location>
</feature>
<feature type="compositionally biased region" description="Polar residues" evidence="2">
    <location>
        <begin position="280"/>
        <end position="289"/>
    </location>
</feature>
<feature type="compositionally biased region" description="Basic and acidic residues" evidence="2">
    <location>
        <begin position="431"/>
        <end position="444"/>
    </location>
</feature>
<feature type="modified residue" description="Phosphoserine" evidence="1">
    <location>
        <position position="177"/>
    </location>
</feature>
<feature type="modified residue" description="Phosphoserine" evidence="1">
    <location>
        <position position="182"/>
    </location>
</feature>
<feature type="modified residue" description="Phosphoserine" evidence="1">
    <location>
        <position position="254"/>
    </location>
</feature>
<feature type="modified residue" description="Phosphoserine" evidence="1">
    <location>
        <position position="302"/>
    </location>
</feature>
<proteinExistence type="evidence at transcript level"/>
<dbReference type="EC" id="3.6.1.-" evidence="1"/>
<dbReference type="EMBL" id="AK019097">
    <property type="protein sequence ID" value="BAB31544.1"/>
    <property type="molecule type" value="mRNA"/>
</dbReference>
<dbReference type="EMBL" id="AK088850">
    <property type="protein sequence ID" value="BAC40612.1"/>
    <property type="molecule type" value="mRNA"/>
</dbReference>
<dbReference type="EMBL" id="AK148008">
    <property type="protein sequence ID" value="BAE28285.1"/>
    <property type="molecule type" value="mRNA"/>
</dbReference>
<dbReference type="EMBL" id="BC044749">
    <property type="protein sequence ID" value="AAH44749.1"/>
    <property type="molecule type" value="mRNA"/>
</dbReference>
<dbReference type="CCDS" id="CCDS40159.1"/>
<dbReference type="RefSeq" id="NP_080931.1">
    <property type="nucleotide sequence ID" value="NM_026655.3"/>
</dbReference>
<dbReference type="RefSeq" id="XP_011240190.1">
    <property type="nucleotide sequence ID" value="XM_011241888.2"/>
</dbReference>
<dbReference type="SMR" id="Q9D2Q3"/>
<dbReference type="FunCoup" id="Q9D2Q3">
    <property type="interactions" value="3034"/>
</dbReference>
<dbReference type="STRING" id="10090.ENSMUSP00000050128"/>
<dbReference type="GlyGen" id="Q9D2Q3">
    <property type="glycosylation" value="1 site, 1 N-linked glycan (1 site)"/>
</dbReference>
<dbReference type="iPTMnet" id="Q9D2Q3"/>
<dbReference type="PhosphoSitePlus" id="Q9D2Q3"/>
<dbReference type="SwissPalm" id="Q9D2Q3"/>
<dbReference type="jPOST" id="Q9D2Q3"/>
<dbReference type="PaxDb" id="10090-ENSMUSP00000050128"/>
<dbReference type="PeptideAtlas" id="Q9D2Q3"/>
<dbReference type="Pumba" id="Q9D2Q3"/>
<dbReference type="Antibodypedia" id="32320">
    <property type="antibodies" value="60 antibodies from 14 providers"/>
</dbReference>
<dbReference type="Ensembl" id="ENSMUST00000059438.11">
    <property type="protein sequence ID" value="ENSMUSP00000050128.10"/>
    <property type="gene ID" value="ENSMUSG00000040177.11"/>
</dbReference>
<dbReference type="GeneID" id="68277"/>
<dbReference type="KEGG" id="mmu:68277"/>
<dbReference type="UCSC" id="uc009kbg.1">
    <property type="organism name" value="mouse"/>
</dbReference>
<dbReference type="AGR" id="MGI:1915527"/>
<dbReference type="MGI" id="MGI:1915527">
    <property type="gene designation" value="2310057M21Rik"/>
</dbReference>
<dbReference type="VEuPathDB" id="HostDB:ENSMUSG00000040177"/>
<dbReference type="eggNOG" id="ENOG502RUU4">
    <property type="taxonomic scope" value="Eukaryota"/>
</dbReference>
<dbReference type="GeneTree" id="ENSGT00390000017384"/>
<dbReference type="HOGENOM" id="CLU_053533_0_0_1"/>
<dbReference type="InParanoid" id="Q9D2Q3"/>
<dbReference type="OMA" id="PMLQNVC"/>
<dbReference type="OrthoDB" id="5981473at2759"/>
<dbReference type="PhylomeDB" id="Q9D2Q3"/>
<dbReference type="TreeFam" id="TF333208"/>
<dbReference type="BioGRID-ORCS" id="68277">
    <property type="hits" value="2 hits in 78 CRISPR screens"/>
</dbReference>
<dbReference type="PRO" id="PR:Q9D2Q3"/>
<dbReference type="Proteomes" id="UP000000589">
    <property type="component" value="Chromosome 7"/>
</dbReference>
<dbReference type="RNAct" id="Q9D2Q3">
    <property type="molecule type" value="protein"/>
</dbReference>
<dbReference type="Bgee" id="ENSMUSG00000040177">
    <property type="expression patterns" value="Expressed in occipital region and 249 other cell types or tissues"/>
</dbReference>
<dbReference type="ExpressionAtlas" id="Q9D2Q3">
    <property type="expression patterns" value="baseline and differential"/>
</dbReference>
<dbReference type="GO" id="GO:0005737">
    <property type="term" value="C:cytoplasm"/>
    <property type="evidence" value="ECO:0000250"/>
    <property type="project" value="UniProtKB"/>
</dbReference>
<dbReference type="GO" id="GO:0005739">
    <property type="term" value="C:mitochondrion"/>
    <property type="evidence" value="ECO:0000250"/>
    <property type="project" value="UniProtKB"/>
</dbReference>
<dbReference type="GO" id="GO:0016887">
    <property type="term" value="F:ATP hydrolysis activity"/>
    <property type="evidence" value="ECO:0000250"/>
    <property type="project" value="UniProtKB"/>
</dbReference>
<dbReference type="GO" id="GO:0042802">
    <property type="term" value="F:identical protein binding"/>
    <property type="evidence" value="ECO:0000353"/>
    <property type="project" value="MGI"/>
</dbReference>
<dbReference type="InterPro" id="IPR028043">
    <property type="entry name" value="PAAT-like"/>
</dbReference>
<dbReference type="PANTHER" id="PTHR14787:SF1">
    <property type="entry name" value="ATPASE PAAT"/>
    <property type="match status" value="1"/>
</dbReference>
<dbReference type="PANTHER" id="PTHR14787">
    <property type="entry name" value="C10ORF188 FAMILY MEMBER"/>
    <property type="match status" value="1"/>
</dbReference>
<dbReference type="Pfam" id="PF14958">
    <property type="entry name" value="PAAT-like"/>
    <property type="match status" value="1"/>
</dbReference>
<dbReference type="PROSITE" id="PS00211">
    <property type="entry name" value="ABC_TRANSPORTER_1"/>
    <property type="match status" value="1"/>
</dbReference>
<protein>
    <recommendedName>
        <fullName evidence="3">ATPase PAAT</fullName>
        <ecNumber evidence="1">3.6.1.-</ecNumber>
    </recommendedName>
    <alternativeName>
        <fullName evidence="1">Protein associated with ABC transporters</fullName>
        <shortName evidence="1">PAAT</shortName>
    </alternativeName>
</protein>
<sequence>METAIEDAGLDRGPTLTSSWDAACGALTQSLFLTRTGPRAQDLDFEQLLEPPAPSQDPVSLKSSLSPRDENPCFIYLNCGPNGGEEILSVGVLSSARNMEVYLGEEYCGTSRGKTACTVLDDSEHEKILLYKKYLKLDSPTHACKIKLLSFGEKQCVLVSKVVVHLRPRSADPSPRSAALGSRIDLDNIQTIMESMGSRLSPGAQQLMSMIRFQQQNRLPIGDQLQSVLGSAGHKHLMALQSSPSPAVLDKASSTPFPFRTGLTPSAITENLKALIDKSAQPSGEGNTTNHDEGHLMPQNHSLESDLKNAVSSFLPKKASGSSSVPSSELLPFLQNLCSQVNHLRVGHNARWQENISKPREGMVGVPMEEQPVCSYLEKILSKNMELMEKKLMDHIDERIYQLQEHIDAKMALLVDLLRGPNSPPPGMPLRHYDSRERLSNGER</sequence>
<gene>
    <name evidence="1" type="primary">Paat</name>
</gene>
<name>PAAT_MOUSE</name>
<evidence type="ECO:0000250" key="1">
    <source>
        <dbReference type="UniProtKB" id="Q9H8K7"/>
    </source>
</evidence>
<evidence type="ECO:0000256" key="2">
    <source>
        <dbReference type="SAM" id="MobiDB-lite"/>
    </source>
</evidence>
<evidence type="ECO:0000305" key="3"/>
<reference key="1">
    <citation type="journal article" date="2005" name="Science">
        <title>The transcriptional landscape of the mammalian genome.</title>
        <authorList>
            <person name="Carninci P."/>
            <person name="Kasukawa T."/>
            <person name="Katayama S."/>
            <person name="Gough J."/>
            <person name="Frith M.C."/>
            <person name="Maeda N."/>
            <person name="Oyama R."/>
            <person name="Ravasi T."/>
            <person name="Lenhard B."/>
            <person name="Wells C."/>
            <person name="Kodzius R."/>
            <person name="Shimokawa K."/>
            <person name="Bajic V.B."/>
            <person name="Brenner S.E."/>
            <person name="Batalov S."/>
            <person name="Forrest A.R."/>
            <person name="Zavolan M."/>
            <person name="Davis M.J."/>
            <person name="Wilming L.G."/>
            <person name="Aidinis V."/>
            <person name="Allen J.E."/>
            <person name="Ambesi-Impiombato A."/>
            <person name="Apweiler R."/>
            <person name="Aturaliya R.N."/>
            <person name="Bailey T.L."/>
            <person name="Bansal M."/>
            <person name="Baxter L."/>
            <person name="Beisel K.W."/>
            <person name="Bersano T."/>
            <person name="Bono H."/>
            <person name="Chalk A.M."/>
            <person name="Chiu K.P."/>
            <person name="Choudhary V."/>
            <person name="Christoffels A."/>
            <person name="Clutterbuck D.R."/>
            <person name="Crowe M.L."/>
            <person name="Dalla E."/>
            <person name="Dalrymple B.P."/>
            <person name="de Bono B."/>
            <person name="Della Gatta G."/>
            <person name="di Bernardo D."/>
            <person name="Down T."/>
            <person name="Engstrom P."/>
            <person name="Fagiolini M."/>
            <person name="Faulkner G."/>
            <person name="Fletcher C.F."/>
            <person name="Fukushima T."/>
            <person name="Furuno M."/>
            <person name="Futaki S."/>
            <person name="Gariboldi M."/>
            <person name="Georgii-Hemming P."/>
            <person name="Gingeras T.R."/>
            <person name="Gojobori T."/>
            <person name="Green R.E."/>
            <person name="Gustincich S."/>
            <person name="Harbers M."/>
            <person name="Hayashi Y."/>
            <person name="Hensch T.K."/>
            <person name="Hirokawa N."/>
            <person name="Hill D."/>
            <person name="Huminiecki L."/>
            <person name="Iacono M."/>
            <person name="Ikeo K."/>
            <person name="Iwama A."/>
            <person name="Ishikawa T."/>
            <person name="Jakt M."/>
            <person name="Kanapin A."/>
            <person name="Katoh M."/>
            <person name="Kawasawa Y."/>
            <person name="Kelso J."/>
            <person name="Kitamura H."/>
            <person name="Kitano H."/>
            <person name="Kollias G."/>
            <person name="Krishnan S.P."/>
            <person name="Kruger A."/>
            <person name="Kummerfeld S.K."/>
            <person name="Kurochkin I.V."/>
            <person name="Lareau L.F."/>
            <person name="Lazarevic D."/>
            <person name="Lipovich L."/>
            <person name="Liu J."/>
            <person name="Liuni S."/>
            <person name="McWilliam S."/>
            <person name="Madan Babu M."/>
            <person name="Madera M."/>
            <person name="Marchionni L."/>
            <person name="Matsuda H."/>
            <person name="Matsuzawa S."/>
            <person name="Miki H."/>
            <person name="Mignone F."/>
            <person name="Miyake S."/>
            <person name="Morris K."/>
            <person name="Mottagui-Tabar S."/>
            <person name="Mulder N."/>
            <person name="Nakano N."/>
            <person name="Nakauchi H."/>
            <person name="Ng P."/>
            <person name="Nilsson R."/>
            <person name="Nishiguchi S."/>
            <person name="Nishikawa S."/>
            <person name="Nori F."/>
            <person name="Ohara O."/>
            <person name="Okazaki Y."/>
            <person name="Orlando V."/>
            <person name="Pang K.C."/>
            <person name="Pavan W.J."/>
            <person name="Pavesi G."/>
            <person name="Pesole G."/>
            <person name="Petrovsky N."/>
            <person name="Piazza S."/>
            <person name="Reed J."/>
            <person name="Reid J.F."/>
            <person name="Ring B.Z."/>
            <person name="Ringwald M."/>
            <person name="Rost B."/>
            <person name="Ruan Y."/>
            <person name="Salzberg S.L."/>
            <person name="Sandelin A."/>
            <person name="Schneider C."/>
            <person name="Schoenbach C."/>
            <person name="Sekiguchi K."/>
            <person name="Semple C.A."/>
            <person name="Seno S."/>
            <person name="Sessa L."/>
            <person name="Sheng Y."/>
            <person name="Shibata Y."/>
            <person name="Shimada H."/>
            <person name="Shimada K."/>
            <person name="Silva D."/>
            <person name="Sinclair B."/>
            <person name="Sperling S."/>
            <person name="Stupka E."/>
            <person name="Sugiura K."/>
            <person name="Sultana R."/>
            <person name="Takenaka Y."/>
            <person name="Taki K."/>
            <person name="Tammoja K."/>
            <person name="Tan S.L."/>
            <person name="Tang S."/>
            <person name="Taylor M.S."/>
            <person name="Tegner J."/>
            <person name="Teichmann S.A."/>
            <person name="Ueda H.R."/>
            <person name="van Nimwegen E."/>
            <person name="Verardo R."/>
            <person name="Wei C.L."/>
            <person name="Yagi K."/>
            <person name="Yamanishi H."/>
            <person name="Zabarovsky E."/>
            <person name="Zhu S."/>
            <person name="Zimmer A."/>
            <person name="Hide W."/>
            <person name="Bult C."/>
            <person name="Grimmond S.M."/>
            <person name="Teasdale R.D."/>
            <person name="Liu E.T."/>
            <person name="Brusic V."/>
            <person name="Quackenbush J."/>
            <person name="Wahlestedt C."/>
            <person name="Mattick J.S."/>
            <person name="Hume D.A."/>
            <person name="Kai C."/>
            <person name="Sasaki D."/>
            <person name="Tomaru Y."/>
            <person name="Fukuda S."/>
            <person name="Kanamori-Katayama M."/>
            <person name="Suzuki M."/>
            <person name="Aoki J."/>
            <person name="Arakawa T."/>
            <person name="Iida J."/>
            <person name="Imamura K."/>
            <person name="Itoh M."/>
            <person name="Kato T."/>
            <person name="Kawaji H."/>
            <person name="Kawagashira N."/>
            <person name="Kawashima T."/>
            <person name="Kojima M."/>
            <person name="Kondo S."/>
            <person name="Konno H."/>
            <person name="Nakano K."/>
            <person name="Ninomiya N."/>
            <person name="Nishio T."/>
            <person name="Okada M."/>
            <person name="Plessy C."/>
            <person name="Shibata K."/>
            <person name="Shiraki T."/>
            <person name="Suzuki S."/>
            <person name="Tagami M."/>
            <person name="Waki K."/>
            <person name="Watahiki A."/>
            <person name="Okamura-Oho Y."/>
            <person name="Suzuki H."/>
            <person name="Kawai J."/>
            <person name="Hayashizaki Y."/>
        </authorList>
    </citation>
    <scope>NUCLEOTIDE SEQUENCE [LARGE SCALE MRNA]</scope>
    <source>
        <strain>C57BL/6J</strain>
        <strain>NOD</strain>
        <tissue>Thymus</tissue>
        <tissue>Tongue</tissue>
    </source>
</reference>
<reference key="2">
    <citation type="journal article" date="2004" name="Genome Res.">
        <title>The status, quality, and expansion of the NIH full-length cDNA project: the Mammalian Gene Collection (MGC).</title>
        <authorList>
            <consortium name="The MGC Project Team"/>
        </authorList>
    </citation>
    <scope>NUCLEOTIDE SEQUENCE [LARGE SCALE MRNA]</scope>
    <source>
        <strain>FVB/N</strain>
        <tissue>Liver</tissue>
    </source>
</reference>
<accession>Q9D2Q3</accession>